<protein>
    <recommendedName>
        <fullName>Pyridine nucleotide-disulfide oxidoreductase domain-containing protein 1</fullName>
        <ecNumber>1.8.1.-</ecNumber>
    </recommendedName>
</protein>
<organism>
    <name type="scientific">Homo sapiens</name>
    <name type="common">Human</name>
    <dbReference type="NCBI Taxonomy" id="9606"/>
    <lineage>
        <taxon>Eukaryota</taxon>
        <taxon>Metazoa</taxon>
        <taxon>Chordata</taxon>
        <taxon>Craniata</taxon>
        <taxon>Vertebrata</taxon>
        <taxon>Euteleostomi</taxon>
        <taxon>Mammalia</taxon>
        <taxon>Eutheria</taxon>
        <taxon>Euarchontoglires</taxon>
        <taxon>Primates</taxon>
        <taxon>Haplorrhini</taxon>
        <taxon>Catarrhini</taxon>
        <taxon>Hominidae</taxon>
        <taxon>Homo</taxon>
    </lineage>
</organism>
<evidence type="ECO:0000250" key="1">
    <source>
        <dbReference type="UniProtKB" id="O52582"/>
    </source>
</evidence>
<evidence type="ECO:0000250" key="2">
    <source>
        <dbReference type="UniProtKB" id="Q6PBT5"/>
    </source>
</evidence>
<evidence type="ECO:0000256" key="3">
    <source>
        <dbReference type="SAM" id="MobiDB-lite"/>
    </source>
</evidence>
<evidence type="ECO:0000269" key="4">
    <source>
    </source>
</evidence>
<evidence type="ECO:0000269" key="5">
    <source>
    </source>
</evidence>
<evidence type="ECO:0000303" key="6">
    <source>
    </source>
</evidence>
<evidence type="ECO:0000305" key="7"/>
<evidence type="ECO:0007744" key="8">
    <source>
    </source>
</evidence>
<proteinExistence type="evidence at protein level"/>
<gene>
    <name type="primary">PYROXD1</name>
</gene>
<dbReference type="EC" id="1.8.1.-"/>
<dbReference type="EMBL" id="AK025681">
    <property type="protein sequence ID" value="BAB15214.1"/>
    <property type="status" value="ALT_FRAME"/>
    <property type="molecule type" value="mRNA"/>
</dbReference>
<dbReference type="EMBL" id="AK125461">
    <property type="protein sequence ID" value="BAG54200.1"/>
    <property type="molecule type" value="mRNA"/>
</dbReference>
<dbReference type="EMBL" id="AL832441">
    <property type="protein sequence ID" value="CAH10632.1"/>
    <property type="molecule type" value="mRNA"/>
</dbReference>
<dbReference type="EMBL" id="AC006559">
    <property type="status" value="NOT_ANNOTATED_CDS"/>
    <property type="molecule type" value="Genomic_DNA"/>
</dbReference>
<dbReference type="EMBL" id="CH471094">
    <property type="protein sequence ID" value="EAW96428.1"/>
    <property type="molecule type" value="Genomic_DNA"/>
</dbReference>
<dbReference type="EMBL" id="BC021662">
    <property type="protein sequence ID" value="AAH21662.1"/>
    <property type="molecule type" value="mRNA"/>
</dbReference>
<dbReference type="CCDS" id="CCDS31755.1">
    <molecule id="Q8WU10-1"/>
</dbReference>
<dbReference type="CCDS" id="CCDS86287.1">
    <molecule id="Q8WU10-2"/>
</dbReference>
<dbReference type="RefSeq" id="NP_001337841.1">
    <molecule id="Q8WU10-2"/>
    <property type="nucleotide sequence ID" value="NM_001350912.2"/>
</dbReference>
<dbReference type="RefSeq" id="NP_079130.2">
    <molecule id="Q8WU10-1"/>
    <property type="nucleotide sequence ID" value="NM_024854.5"/>
</dbReference>
<dbReference type="PDB" id="6ZK7">
    <property type="method" value="X-ray"/>
    <property type="resolution" value="3.20 A"/>
    <property type="chains" value="AAAA=1-500"/>
</dbReference>
<dbReference type="PDB" id="8ORJ">
    <property type="method" value="EM"/>
    <property type="resolution" value="3.30 A"/>
    <property type="chains" value="B=1-500"/>
</dbReference>
<dbReference type="PDBsum" id="6ZK7"/>
<dbReference type="PDBsum" id="8ORJ"/>
<dbReference type="EMDB" id="EMD-17127"/>
<dbReference type="SMR" id="Q8WU10"/>
<dbReference type="BioGRID" id="122992">
    <property type="interactions" value="18"/>
</dbReference>
<dbReference type="FunCoup" id="Q8WU10">
    <property type="interactions" value="1514"/>
</dbReference>
<dbReference type="IntAct" id="Q8WU10">
    <property type="interactions" value="3"/>
</dbReference>
<dbReference type="MINT" id="Q8WU10"/>
<dbReference type="STRING" id="9606.ENSP00000240651"/>
<dbReference type="GlyGen" id="Q8WU10">
    <property type="glycosylation" value="1 site"/>
</dbReference>
<dbReference type="iPTMnet" id="Q8WU10"/>
<dbReference type="PhosphoSitePlus" id="Q8WU10"/>
<dbReference type="BioMuta" id="PYROXD1"/>
<dbReference type="DMDM" id="74760541"/>
<dbReference type="jPOST" id="Q8WU10"/>
<dbReference type="MassIVE" id="Q8WU10"/>
<dbReference type="PaxDb" id="9606-ENSP00000240651"/>
<dbReference type="PeptideAtlas" id="Q8WU10"/>
<dbReference type="ProteomicsDB" id="3796"/>
<dbReference type="ProteomicsDB" id="74622">
    <molecule id="Q8WU10-1"/>
</dbReference>
<dbReference type="Pumba" id="Q8WU10"/>
<dbReference type="Antibodypedia" id="49414">
    <property type="antibodies" value="63 antibodies from 20 providers"/>
</dbReference>
<dbReference type="DNASU" id="79912"/>
<dbReference type="Ensembl" id="ENST00000240651.14">
    <molecule id="Q8WU10-1"/>
    <property type="protein sequence ID" value="ENSP00000240651.9"/>
    <property type="gene ID" value="ENSG00000121350.16"/>
</dbReference>
<dbReference type="Ensembl" id="ENST00000538582.5">
    <molecule id="Q8WU10-2"/>
    <property type="protein sequence ID" value="ENSP00000438505.1"/>
    <property type="gene ID" value="ENSG00000121350.16"/>
</dbReference>
<dbReference type="GeneID" id="79912"/>
<dbReference type="KEGG" id="hsa:79912"/>
<dbReference type="MANE-Select" id="ENST00000240651.14">
    <property type="protein sequence ID" value="ENSP00000240651.9"/>
    <property type="RefSeq nucleotide sequence ID" value="NM_024854.5"/>
    <property type="RefSeq protein sequence ID" value="NP_079130.2"/>
</dbReference>
<dbReference type="UCSC" id="uc001rew.4">
    <molecule id="Q8WU10-1"/>
    <property type="organism name" value="human"/>
</dbReference>
<dbReference type="AGR" id="HGNC:26162"/>
<dbReference type="CTD" id="79912"/>
<dbReference type="DisGeNET" id="79912"/>
<dbReference type="GeneCards" id="PYROXD1"/>
<dbReference type="HGNC" id="HGNC:26162">
    <property type="gene designation" value="PYROXD1"/>
</dbReference>
<dbReference type="HPA" id="ENSG00000121350">
    <property type="expression patterns" value="Low tissue specificity"/>
</dbReference>
<dbReference type="MalaCards" id="PYROXD1"/>
<dbReference type="MIM" id="617220">
    <property type="type" value="gene"/>
</dbReference>
<dbReference type="MIM" id="617258">
    <property type="type" value="phenotype"/>
</dbReference>
<dbReference type="neXtProt" id="NX_Q8WU10"/>
<dbReference type="OpenTargets" id="ENSG00000121350"/>
<dbReference type="PharmGKB" id="PA162400525"/>
<dbReference type="VEuPathDB" id="HostDB:ENSG00000121350"/>
<dbReference type="eggNOG" id="KOG2755">
    <property type="taxonomic scope" value="Eukaryota"/>
</dbReference>
<dbReference type="GeneTree" id="ENSGT00390000014894"/>
<dbReference type="HOGENOM" id="CLU_026335_0_0_1"/>
<dbReference type="InParanoid" id="Q8WU10"/>
<dbReference type="OMA" id="MCENLIL"/>
<dbReference type="OrthoDB" id="202203at2759"/>
<dbReference type="PAN-GO" id="Q8WU10">
    <property type="GO annotations" value="0 GO annotations based on evolutionary models"/>
</dbReference>
<dbReference type="PhylomeDB" id="Q8WU10"/>
<dbReference type="TreeFam" id="TF105963"/>
<dbReference type="PathwayCommons" id="Q8WU10"/>
<dbReference type="SignaLink" id="Q8WU10"/>
<dbReference type="BioGRID-ORCS" id="79912">
    <property type="hits" value="644 hits in 1105 CRISPR screens"/>
</dbReference>
<dbReference type="ChiTaRS" id="PYROXD1">
    <property type="organism name" value="human"/>
</dbReference>
<dbReference type="GenomeRNAi" id="79912"/>
<dbReference type="Pharos" id="Q8WU10">
    <property type="development level" value="Tbio"/>
</dbReference>
<dbReference type="PRO" id="PR:Q8WU10"/>
<dbReference type="Proteomes" id="UP000005640">
    <property type="component" value="Chromosome 12"/>
</dbReference>
<dbReference type="RNAct" id="Q8WU10">
    <property type="molecule type" value="protein"/>
</dbReference>
<dbReference type="Bgee" id="ENSG00000121350">
    <property type="expression patterns" value="Expressed in buccal mucosa cell and 208 other cell types or tissues"/>
</dbReference>
<dbReference type="ExpressionAtlas" id="Q8WU10">
    <property type="expression patterns" value="baseline and differential"/>
</dbReference>
<dbReference type="GO" id="GO:0005634">
    <property type="term" value="C:nucleus"/>
    <property type="evidence" value="ECO:0000314"/>
    <property type="project" value="UniProtKB"/>
</dbReference>
<dbReference type="GO" id="GO:0030017">
    <property type="term" value="C:sarcomere"/>
    <property type="evidence" value="ECO:0000314"/>
    <property type="project" value="UniProtKB"/>
</dbReference>
<dbReference type="GO" id="GO:0016174">
    <property type="term" value="F:NAD(P)H oxidase H2O2-forming activity"/>
    <property type="evidence" value="ECO:0000314"/>
    <property type="project" value="FlyBase"/>
</dbReference>
<dbReference type="GO" id="GO:0034599">
    <property type="term" value="P:cellular response to oxidative stress"/>
    <property type="evidence" value="ECO:0000315"/>
    <property type="project" value="UniProtKB"/>
</dbReference>
<dbReference type="FunFam" id="3.30.390.30:FF:000009">
    <property type="entry name" value="Pyridine nucleotide-disulfide oxidoreductase domain-containing protein 1"/>
    <property type="match status" value="1"/>
</dbReference>
<dbReference type="FunFam" id="3.50.50.60:FF:000165">
    <property type="entry name" value="Pyridine nucleotide-disulfide oxidoreductase domain-containing protein 1"/>
    <property type="match status" value="1"/>
</dbReference>
<dbReference type="FunFam" id="3.50.50.60:FF:000176">
    <property type="entry name" value="Pyridine nucleotide-disulfide oxidoreductase domain-containing protein 1"/>
    <property type="match status" value="1"/>
</dbReference>
<dbReference type="FunFam" id="3.50.50.60:FF:000181">
    <property type="entry name" value="Pyridine nucleotide-disulfide oxidoreductase domain-containing protein 1"/>
    <property type="match status" value="1"/>
</dbReference>
<dbReference type="Gene3D" id="3.30.390.30">
    <property type="match status" value="1"/>
</dbReference>
<dbReference type="Gene3D" id="3.50.50.60">
    <property type="entry name" value="FAD/NAD(P)-binding domain"/>
    <property type="match status" value="3"/>
</dbReference>
<dbReference type="InterPro" id="IPR050260">
    <property type="entry name" value="FAD-bd_OxRdtase"/>
</dbReference>
<dbReference type="InterPro" id="IPR036188">
    <property type="entry name" value="FAD/NAD-bd_sf"/>
</dbReference>
<dbReference type="InterPro" id="IPR023753">
    <property type="entry name" value="FAD/NAD-binding_dom"/>
</dbReference>
<dbReference type="InterPro" id="IPR016156">
    <property type="entry name" value="FAD/NAD-linked_Rdtase_dimer_sf"/>
</dbReference>
<dbReference type="InterPro" id="IPR041575">
    <property type="entry name" value="Rubredoxin_C"/>
</dbReference>
<dbReference type="PANTHER" id="PTHR43429">
    <property type="entry name" value="PYRIDINE NUCLEOTIDE-DISULFIDE OXIDOREDUCTASE DOMAIN-CONTAINING"/>
    <property type="match status" value="1"/>
</dbReference>
<dbReference type="PANTHER" id="PTHR43429:SF2">
    <property type="entry name" value="PYRIDINE NUCLEOTIDE-DISULFIDE OXIDOREDUCTASE DOMAIN-CONTAINING PROTEIN 1"/>
    <property type="match status" value="1"/>
</dbReference>
<dbReference type="Pfam" id="PF07992">
    <property type="entry name" value="Pyr_redox_2"/>
    <property type="match status" value="2"/>
</dbReference>
<dbReference type="Pfam" id="PF18267">
    <property type="entry name" value="Rubredoxin_C"/>
    <property type="match status" value="1"/>
</dbReference>
<dbReference type="PRINTS" id="PR00368">
    <property type="entry name" value="FADPNR"/>
</dbReference>
<dbReference type="PRINTS" id="PR00411">
    <property type="entry name" value="PNDRDTASEI"/>
</dbReference>
<dbReference type="SUPFAM" id="SSF51905">
    <property type="entry name" value="FAD/NAD(P)-binding domain"/>
    <property type="match status" value="1"/>
</dbReference>
<feature type="chain" id="PRO_0000327419" description="Pyridine nucleotide-disulfide oxidoreductase domain-containing protein 1">
    <location>
        <begin position="1"/>
        <end position="500"/>
    </location>
</feature>
<feature type="region of interest" description="Disordered" evidence="3">
    <location>
        <begin position="211"/>
        <end position="235"/>
    </location>
</feature>
<feature type="compositionally biased region" description="Basic and acidic residues" evidence="3">
    <location>
        <begin position="213"/>
        <end position="228"/>
    </location>
</feature>
<feature type="modified residue" description="N-acetylmethionine" evidence="8">
    <location>
        <position position="1"/>
    </location>
</feature>
<feature type="splice variant" id="VSP_055828" description="In isoform 2." evidence="6">
    <location>
        <begin position="1"/>
        <end position="71"/>
    </location>
</feature>
<feature type="sequence variant" id="VAR_077902" description="In MFM8; also found in a patient with limb-girdle muscular dystrophy; decreased function in cellular response to oxidative stress; no effect on subcellular location in the nucleus and sarcomere. Overexpression in C2C12 cells leads to reduced cell proliferation, migration and differentiation.; dbSNP:rs781565158." evidence="4 5">
    <original>N</original>
    <variation>S</variation>
    <location>
        <position position="155"/>
    </location>
</feature>
<feature type="sequence variant" id="VAR_077903" description="In MFM8; decreased function in cellular response to oxidative stress; no effect on subcellular location at nucleus and sarcomere; dbSNP:rs755208949." evidence="4">
    <original>Q</original>
    <variation>H</variation>
    <location>
        <position position="372"/>
    </location>
</feature>
<comment type="function">
    <text evidence="2 4">Probable FAD-dependent oxidoreductase; involved in the cellular oxidative stress response (PubMed:27745833). Required for normal sarcomere structure and muscle fiber integrity (By similarity).</text>
</comment>
<comment type="cofactor">
    <cofactor evidence="1">
        <name>FAD</name>
        <dbReference type="ChEBI" id="CHEBI:57692"/>
    </cofactor>
    <text evidence="1">Binds 1 FAD per subunit.</text>
</comment>
<comment type="interaction">
    <interactant intactId="EBI-742933">
        <id>Q8WU10</id>
    </interactant>
    <interactant intactId="EBI-742943">
        <id>Q96BW1</id>
        <label>UPRT</label>
    </interactant>
    <organismsDiffer>false</organismsDiffer>
    <experiments>10</experiments>
</comment>
<comment type="subcellular location">
    <subcellularLocation>
        <location evidence="4">Nucleus</location>
    </subcellularLocation>
    <subcellularLocation>
        <location evidence="4">Cytoplasm</location>
    </subcellularLocation>
    <subcellularLocation>
        <location evidence="4">Cytoplasm</location>
        <location evidence="4">Myofibril</location>
        <location evidence="4">Sarcomere</location>
    </subcellularLocation>
</comment>
<comment type="alternative products">
    <event type="alternative splicing"/>
    <isoform>
        <id>Q8WU10-1</id>
        <name>1</name>
        <sequence type="displayed"/>
    </isoform>
    <isoform>
        <id>Q8WU10-2</id>
        <name>2</name>
        <sequence type="described" ref="VSP_055828"/>
    </isoform>
</comment>
<comment type="disease" evidence="4">
    <disease id="DI-04890">
        <name>Myopathy, myofibrillar, 8</name>
        <acronym>MFM8</acronym>
        <description>A form of myofibrillar myopathy, a group of chronic neuromuscular disorders characterized at ultrastructural level by disintegration of the sarcomeric Z disk and myofibrils, and replacement of the normal myofibrillar markings by small dense granules, or larger hyaline masses, or amorphous material. MFM8 is an autosomal recessive form, clinically characterized by slowly progressive symmetrical weakness affecting both proximal and distal muscles, with normal to moderately elevated creatine kinase. Mild facial weakness, a high palate, nasal speech, and swallowing difficulties are typical features, mild restrictive lung disease is common, and late-onset cardiac involvement may be present.</description>
        <dbReference type="MIM" id="617258"/>
    </disease>
    <text>The disease is caused by variants affecting the gene represented in this entry.</text>
</comment>
<comment type="disease">
    <text evidence="5">A mutation in PYROXD1 is the cause of autosomal recessive limb-girdle muscular dystrophy. The affected individual with a homozygous recessive PYROXD1 mutation showed progressive muscle weakness with an onset at the age of 9 years. Initial symptoms included excessive falling while running, with slowly progressive weakness. Difficulty navigating stairs by the age if 18, and loss of ambulation at the age of 37 years. Neurological examination showed proximal symmetrical muscle weakness and wasting, along with calf muscle pseudohypertrophy.</text>
</comment>
<comment type="similarity">
    <text evidence="7">Belongs to the class-I pyridine nucleotide-disulfide oxidoreductase family. PYROXD1 subfamily.</text>
</comment>
<comment type="sequence caution" evidence="7">
    <conflict type="frameshift">
        <sequence resource="EMBL-CDS" id="BAB15214"/>
    </conflict>
</comment>
<sequence length="500" mass="55793">MEAARPPPTAGKFVVVGGGIAGVTCAEQLATHFPSEDILLVTASPVIKAVTNFKQISKILEEFDVEEQSSTMLGKRFPNIKVIESGVKQLKSEEHCIVTEDGNQHVYKKLCLCAGAKPKLICEGNPYVLGIRDTDSAQEFQKQLTKAKRIMIIGNGGIALELVYEIEGCEVIWAIKDKAIGNTFFDAGAAEFLTSKLIAEKSEAKIAHKRTRYTTEGRKKEARSKSKADNVGSALGPDWHEGLNLKGTKEFSHKIHLETMCEVKKIYLQDEFRILKKKSFTFPRDHKSVTADTEMWPVYVELTNEKIYGCDFIVSATGVTPNVEPFLHGNSFDLGEDGGLKVDDHMHTSLPDIYAAGDICTTSWQLSPVWQQMRLWTQARQMGWYAAKCMAAASSGDSIDMDFSFELFAHVTKFFNYKVVLLGKYNAQGLGSDHELMLRCTKGREYIKVVMQNGRMMGAVLIGETDLEETFENLILNQMNLSSYGEDLLDPNIDIEDYFD</sequence>
<keyword id="KW-0002">3D-structure</keyword>
<keyword id="KW-0007">Acetylation</keyword>
<keyword id="KW-0025">Alternative splicing</keyword>
<keyword id="KW-0963">Cytoplasm</keyword>
<keyword id="KW-0225">Disease variant</keyword>
<keyword id="KW-0274">FAD</keyword>
<keyword id="KW-0285">Flavoprotein</keyword>
<keyword id="KW-0947">Limb-girdle muscular dystrophy</keyword>
<keyword id="KW-1060">Myofibrillar myopathy</keyword>
<keyword id="KW-0521">NADP</keyword>
<keyword id="KW-0539">Nucleus</keyword>
<keyword id="KW-0560">Oxidoreductase</keyword>
<keyword id="KW-1267">Proteomics identification</keyword>
<keyword id="KW-1185">Reference proteome</keyword>
<accession>Q8WU10</accession>
<accession>A6NKI6</accession>
<accession>B3KWN8</accession>
<accession>Q9H6P1</accession>
<name>PYRD1_HUMAN</name>
<reference key="1">
    <citation type="journal article" date="2004" name="Nat. Genet.">
        <title>Complete sequencing and characterization of 21,243 full-length human cDNAs.</title>
        <authorList>
            <person name="Ota T."/>
            <person name="Suzuki Y."/>
            <person name="Nishikawa T."/>
            <person name="Otsuki T."/>
            <person name="Sugiyama T."/>
            <person name="Irie R."/>
            <person name="Wakamatsu A."/>
            <person name="Hayashi K."/>
            <person name="Sato H."/>
            <person name="Nagai K."/>
            <person name="Kimura K."/>
            <person name="Makita H."/>
            <person name="Sekine M."/>
            <person name="Obayashi M."/>
            <person name="Nishi T."/>
            <person name="Shibahara T."/>
            <person name="Tanaka T."/>
            <person name="Ishii S."/>
            <person name="Yamamoto J."/>
            <person name="Saito K."/>
            <person name="Kawai Y."/>
            <person name="Isono Y."/>
            <person name="Nakamura Y."/>
            <person name="Nagahari K."/>
            <person name="Murakami K."/>
            <person name="Yasuda T."/>
            <person name="Iwayanagi T."/>
            <person name="Wagatsuma M."/>
            <person name="Shiratori A."/>
            <person name="Sudo H."/>
            <person name="Hosoiri T."/>
            <person name="Kaku Y."/>
            <person name="Kodaira H."/>
            <person name="Kondo H."/>
            <person name="Sugawara M."/>
            <person name="Takahashi M."/>
            <person name="Kanda K."/>
            <person name="Yokoi T."/>
            <person name="Furuya T."/>
            <person name="Kikkawa E."/>
            <person name="Omura Y."/>
            <person name="Abe K."/>
            <person name="Kamihara K."/>
            <person name="Katsuta N."/>
            <person name="Sato K."/>
            <person name="Tanikawa M."/>
            <person name="Yamazaki M."/>
            <person name="Ninomiya K."/>
            <person name="Ishibashi T."/>
            <person name="Yamashita H."/>
            <person name="Murakawa K."/>
            <person name="Fujimori K."/>
            <person name="Tanai H."/>
            <person name="Kimata M."/>
            <person name="Watanabe M."/>
            <person name="Hiraoka S."/>
            <person name="Chiba Y."/>
            <person name="Ishida S."/>
            <person name="Ono Y."/>
            <person name="Takiguchi S."/>
            <person name="Watanabe S."/>
            <person name="Yosida M."/>
            <person name="Hotuta T."/>
            <person name="Kusano J."/>
            <person name="Kanehori K."/>
            <person name="Takahashi-Fujii A."/>
            <person name="Hara H."/>
            <person name="Tanase T.-O."/>
            <person name="Nomura Y."/>
            <person name="Togiya S."/>
            <person name="Komai F."/>
            <person name="Hara R."/>
            <person name="Takeuchi K."/>
            <person name="Arita M."/>
            <person name="Imose N."/>
            <person name="Musashino K."/>
            <person name="Yuuki H."/>
            <person name="Oshima A."/>
            <person name="Sasaki N."/>
            <person name="Aotsuka S."/>
            <person name="Yoshikawa Y."/>
            <person name="Matsunawa H."/>
            <person name="Ichihara T."/>
            <person name="Shiohata N."/>
            <person name="Sano S."/>
            <person name="Moriya S."/>
            <person name="Momiyama H."/>
            <person name="Satoh N."/>
            <person name="Takami S."/>
            <person name="Terashima Y."/>
            <person name="Suzuki O."/>
            <person name="Nakagawa S."/>
            <person name="Senoh A."/>
            <person name="Mizoguchi H."/>
            <person name="Goto Y."/>
            <person name="Shimizu F."/>
            <person name="Wakebe H."/>
            <person name="Hishigaki H."/>
            <person name="Watanabe T."/>
            <person name="Sugiyama A."/>
            <person name="Takemoto M."/>
            <person name="Kawakami B."/>
            <person name="Yamazaki M."/>
            <person name="Watanabe K."/>
            <person name="Kumagai A."/>
            <person name="Itakura S."/>
            <person name="Fukuzumi Y."/>
            <person name="Fujimori Y."/>
            <person name="Komiyama M."/>
            <person name="Tashiro H."/>
            <person name="Tanigami A."/>
            <person name="Fujiwara T."/>
            <person name="Ono T."/>
            <person name="Yamada K."/>
            <person name="Fujii Y."/>
            <person name="Ozaki K."/>
            <person name="Hirao M."/>
            <person name="Ohmori Y."/>
            <person name="Kawabata A."/>
            <person name="Hikiji T."/>
            <person name="Kobatake N."/>
            <person name="Inagaki H."/>
            <person name="Ikema Y."/>
            <person name="Okamoto S."/>
            <person name="Okitani R."/>
            <person name="Kawakami T."/>
            <person name="Noguchi S."/>
            <person name="Itoh T."/>
            <person name="Shigeta K."/>
            <person name="Senba T."/>
            <person name="Matsumura K."/>
            <person name="Nakajima Y."/>
            <person name="Mizuno T."/>
            <person name="Morinaga M."/>
            <person name="Sasaki M."/>
            <person name="Togashi T."/>
            <person name="Oyama M."/>
            <person name="Hata H."/>
            <person name="Watanabe M."/>
            <person name="Komatsu T."/>
            <person name="Mizushima-Sugano J."/>
            <person name="Satoh T."/>
            <person name="Shirai Y."/>
            <person name="Takahashi Y."/>
            <person name="Nakagawa K."/>
            <person name="Okumura K."/>
            <person name="Nagase T."/>
            <person name="Nomura N."/>
            <person name="Kikuchi H."/>
            <person name="Masuho Y."/>
            <person name="Yamashita R."/>
            <person name="Nakai K."/>
            <person name="Yada T."/>
            <person name="Nakamura Y."/>
            <person name="Ohara O."/>
            <person name="Isogai T."/>
            <person name="Sugano S."/>
        </authorList>
    </citation>
    <scope>NUCLEOTIDE SEQUENCE [LARGE SCALE MRNA] (ISOFORMS 1 AND 2)</scope>
    <source>
        <tissue>Brain</tissue>
        <tissue>Hepatoma</tissue>
    </source>
</reference>
<reference key="2">
    <citation type="journal article" date="2007" name="BMC Genomics">
        <title>The full-ORF clone resource of the German cDNA consortium.</title>
        <authorList>
            <person name="Bechtel S."/>
            <person name="Rosenfelder H."/>
            <person name="Duda A."/>
            <person name="Schmidt C.P."/>
            <person name="Ernst U."/>
            <person name="Wellenreuther R."/>
            <person name="Mehrle A."/>
            <person name="Schuster C."/>
            <person name="Bahr A."/>
            <person name="Bloecker H."/>
            <person name="Heubner D."/>
            <person name="Hoerlein A."/>
            <person name="Michel G."/>
            <person name="Wedler H."/>
            <person name="Koehrer K."/>
            <person name="Ottenwaelder B."/>
            <person name="Poustka A."/>
            <person name="Wiemann S."/>
            <person name="Schupp I."/>
        </authorList>
    </citation>
    <scope>NUCLEOTIDE SEQUENCE [LARGE SCALE MRNA] (ISOFORM 1)</scope>
    <source>
        <tissue>Melanoma</tissue>
    </source>
</reference>
<reference key="3">
    <citation type="journal article" date="2006" name="Nature">
        <title>The finished DNA sequence of human chromosome 12.</title>
        <authorList>
            <person name="Scherer S.E."/>
            <person name="Muzny D.M."/>
            <person name="Buhay C.J."/>
            <person name="Chen R."/>
            <person name="Cree A."/>
            <person name="Ding Y."/>
            <person name="Dugan-Rocha S."/>
            <person name="Gill R."/>
            <person name="Gunaratne P."/>
            <person name="Harris R.A."/>
            <person name="Hawes A.C."/>
            <person name="Hernandez J."/>
            <person name="Hodgson A.V."/>
            <person name="Hume J."/>
            <person name="Jackson A."/>
            <person name="Khan Z.M."/>
            <person name="Kovar-Smith C."/>
            <person name="Lewis L.R."/>
            <person name="Lozado R.J."/>
            <person name="Metzker M.L."/>
            <person name="Milosavljevic A."/>
            <person name="Miner G.R."/>
            <person name="Montgomery K.T."/>
            <person name="Morgan M.B."/>
            <person name="Nazareth L.V."/>
            <person name="Scott G."/>
            <person name="Sodergren E."/>
            <person name="Song X.-Z."/>
            <person name="Steffen D."/>
            <person name="Lovering R.C."/>
            <person name="Wheeler D.A."/>
            <person name="Worley K.C."/>
            <person name="Yuan Y."/>
            <person name="Zhang Z."/>
            <person name="Adams C.Q."/>
            <person name="Ansari-Lari M.A."/>
            <person name="Ayele M."/>
            <person name="Brown M.J."/>
            <person name="Chen G."/>
            <person name="Chen Z."/>
            <person name="Clerc-Blankenburg K.P."/>
            <person name="Davis C."/>
            <person name="Delgado O."/>
            <person name="Dinh H.H."/>
            <person name="Draper H."/>
            <person name="Gonzalez-Garay M.L."/>
            <person name="Havlak P."/>
            <person name="Jackson L.R."/>
            <person name="Jacob L.S."/>
            <person name="Kelly S.H."/>
            <person name="Li L."/>
            <person name="Li Z."/>
            <person name="Liu J."/>
            <person name="Liu W."/>
            <person name="Lu J."/>
            <person name="Maheshwari M."/>
            <person name="Nguyen B.-V."/>
            <person name="Okwuonu G.O."/>
            <person name="Pasternak S."/>
            <person name="Perez L.M."/>
            <person name="Plopper F.J.H."/>
            <person name="Santibanez J."/>
            <person name="Shen H."/>
            <person name="Tabor P.E."/>
            <person name="Verduzco D."/>
            <person name="Waldron L."/>
            <person name="Wang Q."/>
            <person name="Williams G.A."/>
            <person name="Zhang J."/>
            <person name="Zhou J."/>
            <person name="Allen C.C."/>
            <person name="Amin A.G."/>
            <person name="Anyalebechi V."/>
            <person name="Bailey M."/>
            <person name="Barbaria J.A."/>
            <person name="Bimage K.E."/>
            <person name="Bryant N.P."/>
            <person name="Burch P.E."/>
            <person name="Burkett C.E."/>
            <person name="Burrell K.L."/>
            <person name="Calderon E."/>
            <person name="Cardenas V."/>
            <person name="Carter K."/>
            <person name="Casias K."/>
            <person name="Cavazos I."/>
            <person name="Cavazos S.R."/>
            <person name="Ceasar H."/>
            <person name="Chacko J."/>
            <person name="Chan S.N."/>
            <person name="Chavez D."/>
            <person name="Christopoulos C."/>
            <person name="Chu J."/>
            <person name="Cockrell R."/>
            <person name="Cox C.D."/>
            <person name="Dang M."/>
            <person name="Dathorne S.R."/>
            <person name="David R."/>
            <person name="Davis C.M."/>
            <person name="Davy-Carroll L."/>
            <person name="Deshazo D.R."/>
            <person name="Donlin J.E."/>
            <person name="D'Souza L."/>
            <person name="Eaves K.A."/>
            <person name="Egan A."/>
            <person name="Emery-Cohen A.J."/>
            <person name="Escotto M."/>
            <person name="Flagg N."/>
            <person name="Forbes L.D."/>
            <person name="Gabisi A.M."/>
            <person name="Garza M."/>
            <person name="Hamilton C."/>
            <person name="Henderson N."/>
            <person name="Hernandez O."/>
            <person name="Hines S."/>
            <person name="Hogues M.E."/>
            <person name="Huang M."/>
            <person name="Idlebird D.G."/>
            <person name="Johnson R."/>
            <person name="Jolivet A."/>
            <person name="Jones S."/>
            <person name="Kagan R."/>
            <person name="King L.M."/>
            <person name="Leal B."/>
            <person name="Lebow H."/>
            <person name="Lee S."/>
            <person name="LeVan J.M."/>
            <person name="Lewis L.C."/>
            <person name="London P."/>
            <person name="Lorensuhewa L.M."/>
            <person name="Loulseged H."/>
            <person name="Lovett D.A."/>
            <person name="Lucier A."/>
            <person name="Lucier R.L."/>
            <person name="Ma J."/>
            <person name="Madu R.C."/>
            <person name="Mapua P."/>
            <person name="Martindale A.D."/>
            <person name="Martinez E."/>
            <person name="Massey E."/>
            <person name="Mawhiney S."/>
            <person name="Meador M.G."/>
            <person name="Mendez S."/>
            <person name="Mercado C."/>
            <person name="Mercado I.C."/>
            <person name="Merritt C.E."/>
            <person name="Miner Z.L."/>
            <person name="Minja E."/>
            <person name="Mitchell T."/>
            <person name="Mohabbat F."/>
            <person name="Mohabbat K."/>
            <person name="Montgomery B."/>
            <person name="Moore N."/>
            <person name="Morris S."/>
            <person name="Munidasa M."/>
            <person name="Ngo R.N."/>
            <person name="Nguyen N.B."/>
            <person name="Nickerson E."/>
            <person name="Nwaokelemeh O.O."/>
            <person name="Nwokenkwo S."/>
            <person name="Obregon M."/>
            <person name="Oguh M."/>
            <person name="Oragunye N."/>
            <person name="Oviedo R.J."/>
            <person name="Parish B.J."/>
            <person name="Parker D.N."/>
            <person name="Parrish J."/>
            <person name="Parks K.L."/>
            <person name="Paul H.A."/>
            <person name="Payton B.A."/>
            <person name="Perez A."/>
            <person name="Perrin W."/>
            <person name="Pickens A."/>
            <person name="Primus E.L."/>
            <person name="Pu L.-L."/>
            <person name="Puazo M."/>
            <person name="Quiles M.M."/>
            <person name="Quiroz J.B."/>
            <person name="Rabata D."/>
            <person name="Reeves K."/>
            <person name="Ruiz S.J."/>
            <person name="Shao H."/>
            <person name="Sisson I."/>
            <person name="Sonaike T."/>
            <person name="Sorelle R.P."/>
            <person name="Sutton A.E."/>
            <person name="Svatek A.F."/>
            <person name="Svetz L.A."/>
            <person name="Tamerisa K.S."/>
            <person name="Taylor T.R."/>
            <person name="Teague B."/>
            <person name="Thomas N."/>
            <person name="Thorn R.D."/>
            <person name="Trejos Z.Y."/>
            <person name="Trevino B.K."/>
            <person name="Ukegbu O.N."/>
            <person name="Urban J.B."/>
            <person name="Vasquez L.I."/>
            <person name="Vera V.A."/>
            <person name="Villasana D.M."/>
            <person name="Wang L."/>
            <person name="Ward-Moore S."/>
            <person name="Warren J.T."/>
            <person name="Wei X."/>
            <person name="White F."/>
            <person name="Williamson A.L."/>
            <person name="Wleczyk R."/>
            <person name="Wooden H.S."/>
            <person name="Wooden S.H."/>
            <person name="Yen J."/>
            <person name="Yoon L."/>
            <person name="Yoon V."/>
            <person name="Zorrilla S.E."/>
            <person name="Nelson D."/>
            <person name="Kucherlapati R."/>
            <person name="Weinstock G."/>
            <person name="Gibbs R.A."/>
        </authorList>
    </citation>
    <scope>NUCLEOTIDE SEQUENCE [LARGE SCALE GENOMIC DNA]</scope>
</reference>
<reference key="4">
    <citation type="submission" date="2005-07" db="EMBL/GenBank/DDBJ databases">
        <authorList>
            <person name="Mural R.J."/>
            <person name="Istrail S."/>
            <person name="Sutton G.G."/>
            <person name="Florea L."/>
            <person name="Halpern A.L."/>
            <person name="Mobarry C.M."/>
            <person name="Lippert R."/>
            <person name="Walenz B."/>
            <person name="Shatkay H."/>
            <person name="Dew I."/>
            <person name="Miller J.R."/>
            <person name="Flanigan M.J."/>
            <person name="Edwards N.J."/>
            <person name="Bolanos R."/>
            <person name="Fasulo D."/>
            <person name="Halldorsson B.V."/>
            <person name="Hannenhalli S."/>
            <person name="Turner R."/>
            <person name="Yooseph S."/>
            <person name="Lu F."/>
            <person name="Nusskern D.R."/>
            <person name="Shue B.C."/>
            <person name="Zheng X.H."/>
            <person name="Zhong F."/>
            <person name="Delcher A.L."/>
            <person name="Huson D.H."/>
            <person name="Kravitz S.A."/>
            <person name="Mouchard L."/>
            <person name="Reinert K."/>
            <person name="Remington K.A."/>
            <person name="Clark A.G."/>
            <person name="Waterman M.S."/>
            <person name="Eichler E.E."/>
            <person name="Adams M.D."/>
            <person name="Hunkapiller M.W."/>
            <person name="Myers E.W."/>
            <person name="Venter J.C."/>
        </authorList>
    </citation>
    <scope>NUCLEOTIDE SEQUENCE [LARGE SCALE GENOMIC DNA]</scope>
</reference>
<reference key="5">
    <citation type="journal article" date="2004" name="Genome Res.">
        <title>The status, quality, and expansion of the NIH full-length cDNA project: the Mammalian Gene Collection (MGC).</title>
        <authorList>
            <consortium name="The MGC Project Team"/>
        </authorList>
    </citation>
    <scope>NUCLEOTIDE SEQUENCE [LARGE SCALE MRNA] (ISOFORM 1)</scope>
    <source>
        <tissue>Kidney</tissue>
    </source>
</reference>
<reference key="6">
    <citation type="journal article" date="2009" name="Anal. Chem.">
        <title>Lys-N and trypsin cover complementary parts of the phosphoproteome in a refined SCX-based approach.</title>
        <authorList>
            <person name="Gauci S."/>
            <person name="Helbig A.O."/>
            <person name="Slijper M."/>
            <person name="Krijgsveld J."/>
            <person name="Heck A.J."/>
            <person name="Mohammed S."/>
        </authorList>
    </citation>
    <scope>ACETYLATION [LARGE SCALE ANALYSIS] AT MET-1</scope>
    <scope>IDENTIFICATION BY MASS SPECTROMETRY [LARGE SCALE ANALYSIS]</scope>
</reference>
<reference key="7">
    <citation type="journal article" date="2016" name="Am. J. Hum. Genet.">
        <title>Variants in the oxidoreductase PYROXD1 cause early-onset myopathy with internalized nuclei and myofibrillar disorganization.</title>
        <authorList>
            <person name="O'Grady G.L."/>
            <person name="Best H.A."/>
            <person name="Sztal T.E."/>
            <person name="Schartner V."/>
            <person name="Sanjuan-Vazquez M."/>
            <person name="Donkervoort S."/>
            <person name="Abath Neto O."/>
            <person name="Sutton R.B."/>
            <person name="Ilkovski B."/>
            <person name="Romero N.B."/>
            <person name="Stojkovic T."/>
            <person name="Dastgir J."/>
            <person name="Waddell L.B."/>
            <person name="Boland A."/>
            <person name="Hu Y."/>
            <person name="Williams C."/>
            <person name="Ruparelia A.A."/>
            <person name="Maisonobe T."/>
            <person name="Peduto A.J."/>
            <person name="Reddel S.W."/>
            <person name="Lek M."/>
            <person name="Tukiainen T."/>
            <person name="Cummings B.B."/>
            <person name="Joshi H."/>
            <person name="Nectoux J."/>
            <person name="Brammah S."/>
            <person name="Deleuze J.F."/>
            <person name="Ing V.O."/>
            <person name="Ramm G."/>
            <person name="Ardicli D."/>
            <person name="Nowak K.J."/>
            <person name="Talim B."/>
            <person name="Topaloglu H."/>
            <person name="Laing N.G."/>
            <person name="North K.N."/>
            <person name="MacArthur D.G."/>
            <person name="Friant S."/>
            <person name="Clarke N.F."/>
            <person name="Bryson-Richardson R.J."/>
            <person name="Boennemann C.G."/>
            <person name="Laporte J."/>
            <person name="Cooper S.T."/>
        </authorList>
    </citation>
    <scope>FUNCTION</scope>
    <scope>SUBCELLULAR LOCATION</scope>
    <scope>INVOLVEMENT IN MFM8</scope>
    <scope>VARIANTS MFM8 SER-155 AND HIS-372</scope>
    <scope>CHARACTERIZATION OF VARIANTS MFM8 SER-155 AND HIS-372</scope>
</reference>
<reference key="8">
    <citation type="journal article" date="2018" name="Physiol. Genomics">
        <title>The impact of PYROXD1 deficiency on cellular respiration and correlations with genetic analyses of limb-girdle muscular dystrophy in Saudi Arabia and Sudan.</title>
        <authorList>
            <person name="Saha M."/>
            <person name="Reddy H.M."/>
            <person name="Salih M."/>
            <person name="Estrella E."/>
            <person name="Jones M.D."/>
            <person name="Mitsuhashi S."/>
            <person name="Cho K.A."/>
            <person name="Suzuki-Hatano S."/>
            <person name="Rizzo S.A."/>
            <person name="Hamad M.H."/>
            <person name="Mukhtar M.M."/>
            <person name="Hamed A.A."/>
            <person name="Elseed M.A."/>
            <person name="Lek M."/>
            <person name="Valkanas E."/>
            <person name="MacArthur D.G."/>
            <person name="Kunkel L.M."/>
            <person name="Pacak C.A."/>
            <person name="Draper I."/>
            <person name="Kang P.B."/>
        </authorList>
    </citation>
    <scope>INVOLVEMENT IN LIMB-GIRDLE MUSCULAR DYSTROPHY</scope>
    <scope>VARIANT SER-155</scope>
    <scope>CHARACTERIZATION OF VARIANT SER-155</scope>
</reference>